<name>DCA13_YEAST</name>
<gene>
    <name type="primary">SOF1</name>
    <name type="ordered locus">YLL011W</name>
    <name type="ORF">L1339</name>
</gene>
<reference key="1">
    <citation type="journal article" date="1993" name="EMBO J.">
        <title>A U3 snoRNP protein with homology to splicing factor PRP4 and G beta domains is required for ribosomal RNA processing.</title>
        <authorList>
            <person name="Jansen R."/>
            <person name="Tollervey D."/>
            <person name="Hurt E.C."/>
        </authorList>
    </citation>
    <scope>NUCLEOTIDE SEQUENCE [GENOMIC DNA]</scope>
    <scope>FUNCTION</scope>
    <scope>INTERACTION WITH NOP1 AND SNORNA U3</scope>
    <scope>SUBCELLULAR LOCATION</scope>
</reference>
<reference key="2">
    <citation type="journal article" date="1996" name="Yeast">
        <title>Sequence analysis of the CEN12 region of Saccharomyces cerevisiae on a 43.7 kb fragment of chromosome XII including an open reading frame homologous to the human cystic fibrosis transmembrane conductance regulator protein CFTR.</title>
        <authorList>
            <person name="Miosga T."/>
            <person name="Zimmermann F.K."/>
        </authorList>
    </citation>
    <scope>NUCLEOTIDE SEQUENCE [GENOMIC DNA]</scope>
    <source>
        <strain>ATCC 90840 / EAY235 / FY23</strain>
    </source>
</reference>
<reference key="3">
    <citation type="journal article" date="1997" name="Nature">
        <title>The nucleotide sequence of Saccharomyces cerevisiae chromosome XII.</title>
        <authorList>
            <person name="Johnston M."/>
            <person name="Hillier L.W."/>
            <person name="Riles L."/>
            <person name="Albermann K."/>
            <person name="Andre B."/>
            <person name="Ansorge W."/>
            <person name="Benes V."/>
            <person name="Brueckner M."/>
            <person name="Delius H."/>
            <person name="Dubois E."/>
            <person name="Duesterhoeft A."/>
            <person name="Entian K.-D."/>
            <person name="Floeth M."/>
            <person name="Goffeau A."/>
            <person name="Hebling U."/>
            <person name="Heumann K."/>
            <person name="Heuss-Neitzel D."/>
            <person name="Hilbert H."/>
            <person name="Hilger F."/>
            <person name="Kleine K."/>
            <person name="Koetter P."/>
            <person name="Louis E.J."/>
            <person name="Messenguy F."/>
            <person name="Mewes H.-W."/>
            <person name="Miosga T."/>
            <person name="Moestl D."/>
            <person name="Mueller-Auer S."/>
            <person name="Nentwich U."/>
            <person name="Obermaier B."/>
            <person name="Piravandi E."/>
            <person name="Pohl T.M."/>
            <person name="Portetelle D."/>
            <person name="Purnelle B."/>
            <person name="Rechmann S."/>
            <person name="Rieger M."/>
            <person name="Rinke M."/>
            <person name="Rose M."/>
            <person name="Scharfe M."/>
            <person name="Scherens B."/>
            <person name="Scholler P."/>
            <person name="Schwager C."/>
            <person name="Schwarz S."/>
            <person name="Underwood A.P."/>
            <person name="Urrestarazu L.A."/>
            <person name="Vandenbol M."/>
            <person name="Verhasselt P."/>
            <person name="Vierendeels F."/>
            <person name="Voet M."/>
            <person name="Volckaert G."/>
            <person name="Voss H."/>
            <person name="Wambutt R."/>
            <person name="Wedler E."/>
            <person name="Wedler H."/>
            <person name="Zimmermann F.K."/>
            <person name="Zollner A."/>
            <person name="Hani J."/>
            <person name="Hoheisel J.D."/>
        </authorList>
    </citation>
    <scope>NUCLEOTIDE SEQUENCE [LARGE SCALE GENOMIC DNA]</scope>
    <source>
        <strain>ATCC 204508 / S288c</strain>
    </source>
</reference>
<reference key="4">
    <citation type="journal article" date="2014" name="G3 (Bethesda)">
        <title>The reference genome sequence of Saccharomyces cerevisiae: Then and now.</title>
        <authorList>
            <person name="Engel S.R."/>
            <person name="Dietrich F.S."/>
            <person name="Fisk D.G."/>
            <person name="Binkley G."/>
            <person name="Balakrishnan R."/>
            <person name="Costanzo M.C."/>
            <person name="Dwight S.S."/>
            <person name="Hitz B.C."/>
            <person name="Karra K."/>
            <person name="Nash R.S."/>
            <person name="Weng S."/>
            <person name="Wong E.D."/>
            <person name="Lloyd P."/>
            <person name="Skrzypek M.S."/>
            <person name="Miyasato S.R."/>
            <person name="Simison M."/>
            <person name="Cherry J.M."/>
        </authorList>
    </citation>
    <scope>GENOME REANNOTATION</scope>
    <source>
        <strain>ATCC 204508 / S288c</strain>
    </source>
</reference>
<reference key="5">
    <citation type="journal article" date="2002" name="Nature">
        <title>A large nucleolar U3 ribonucleoprotein required for 18S ribosomal RNA biogenesis.</title>
        <authorList>
            <person name="Dragon F."/>
            <person name="Gallagher J.E.G."/>
            <person name="Compagnone-Post P.A."/>
            <person name="Mitchell B.M."/>
            <person name="Porwancher K.A."/>
            <person name="Wehner K.A."/>
            <person name="Wormsley S."/>
            <person name="Settlage R.E."/>
            <person name="Shabanowitz J."/>
            <person name="Osheim Y."/>
            <person name="Beyer A.L."/>
            <person name="Hunt D.F."/>
            <person name="Baserga S.J."/>
        </authorList>
    </citation>
    <scope>INTERACTION WITH MPP10 AND SNORNA U3</scope>
    <scope>IDENTIFICATION IN SSU PROCESSOME BY MASS SPECTROMETRY</scope>
</reference>
<reference key="6">
    <citation type="journal article" date="2003" name="Nature">
        <title>Global analysis of protein expression in yeast.</title>
        <authorList>
            <person name="Ghaemmaghami S."/>
            <person name="Huh W.-K."/>
            <person name="Bower K."/>
            <person name="Howson R.W."/>
            <person name="Belle A."/>
            <person name="Dephoure N."/>
            <person name="O'Shea E.K."/>
            <person name="Weissman J.S."/>
        </authorList>
    </citation>
    <scope>LEVEL OF PROTEIN EXPRESSION [LARGE SCALE ANALYSIS]</scope>
</reference>
<reference key="7">
    <citation type="journal article" date="2012" name="Proc. Natl. Acad. Sci. U.S.A.">
        <title>N-terminal acetylome analyses and functional insights of the N-terminal acetyltransferase NatB.</title>
        <authorList>
            <person name="Van Damme P."/>
            <person name="Lasa M."/>
            <person name="Polevoda B."/>
            <person name="Gazquez C."/>
            <person name="Elosegui-Artola A."/>
            <person name="Kim D.S."/>
            <person name="De Juan-Pardo E."/>
            <person name="Demeyer K."/>
            <person name="Hole K."/>
            <person name="Larrea E."/>
            <person name="Timmerman E."/>
            <person name="Prieto J."/>
            <person name="Arnesen T."/>
            <person name="Sherman F."/>
            <person name="Gevaert K."/>
            <person name="Aldabe R."/>
        </authorList>
    </citation>
    <scope>IDENTIFICATION BY MASS SPECTROMETRY [LARGE SCALE ANALYSIS]</scope>
</reference>
<protein>
    <recommendedName>
        <fullName>Protein SOF1</fullName>
    </recommendedName>
    <alternativeName>
        <fullName>U3 small nucleolar RNA-associated protein SOF1</fullName>
        <shortName>U3 snoRNA-associated protein SOF1</shortName>
    </alternativeName>
</protein>
<sequence length="489" mass="56789">MKIKTIKRSADDYVPVKSTQESQMPRNLNPELHPFERAREYTKALNATKLERMFAKPFVGQLGYGHRDGVYAIAKNYGSLNKLATGSADGVIKYWNMSTREEFVSFKAHYGLVTGLCVTQPRFHDKKPDLKSQNFMLSCSDDKTVKLWSINVDDYSNKNSSDNDSVTNEEGLIRTFDGESAFQGIDSHRENSTFATGGAKIHLWDVNRLKPVSDLSWGADNITSLKFNQNETDILASTGSDNSIVLYDLRTNSPTQKIVQTMRTNAICWNPMEAFNFVTANEDHNAYYYDMRNLSRSLNVFKDHVSAVMDVDFSPTGDEIVTGSYDKSIRIYKTNHGHSREIYHTKRMQHVFQVKYSMDSKYIISGSDDGNVRLWRSKAWERSNVKTTREKNKLEYDEKLKERFRHMPEIKRISRHRHVPQVIKKAQEIKNIELSSIKRREANERRTRKDMPYISERKKQIVGTVHKYEDSGRDRKRRKEDDKRDTQEK</sequence>
<comment type="function">
    <text evidence="4">Required for ribosomal RNA processing.</text>
</comment>
<comment type="subunit">
    <text evidence="2 4">Interacts with snoRNA U3. Interacts with NOP1 and MPP10. Component of the ribosomal small subunit (SSU) processome composed of at least 40 protein subunits and snoRNA U3.</text>
</comment>
<comment type="subcellular location">
    <subcellularLocation>
        <location evidence="4">Nucleus</location>
        <location evidence="4">Nucleolus</location>
    </subcellularLocation>
</comment>
<comment type="miscellaneous">
    <text evidence="3">Present with 6620 molecules/cell in log phase SD medium.</text>
</comment>
<comment type="similarity">
    <text evidence="5">Belongs to the WD repeat DCAF13/WDSOF1 family.</text>
</comment>
<evidence type="ECO:0000256" key="1">
    <source>
        <dbReference type="SAM" id="MobiDB-lite"/>
    </source>
</evidence>
<evidence type="ECO:0000269" key="2">
    <source>
    </source>
</evidence>
<evidence type="ECO:0000269" key="3">
    <source>
    </source>
</evidence>
<evidence type="ECO:0000269" key="4">
    <source>
    </source>
</evidence>
<evidence type="ECO:0000305" key="5"/>
<proteinExistence type="evidence at protein level"/>
<organism>
    <name type="scientific">Saccharomyces cerevisiae (strain ATCC 204508 / S288c)</name>
    <name type="common">Baker's yeast</name>
    <dbReference type="NCBI Taxonomy" id="559292"/>
    <lineage>
        <taxon>Eukaryota</taxon>
        <taxon>Fungi</taxon>
        <taxon>Dikarya</taxon>
        <taxon>Ascomycota</taxon>
        <taxon>Saccharomycotina</taxon>
        <taxon>Saccharomycetes</taxon>
        <taxon>Saccharomycetales</taxon>
        <taxon>Saccharomycetaceae</taxon>
        <taxon>Saccharomyces</taxon>
    </lineage>
</organism>
<keyword id="KW-0002">3D-structure</keyword>
<keyword id="KW-0539">Nucleus</keyword>
<keyword id="KW-1185">Reference proteome</keyword>
<keyword id="KW-0677">Repeat</keyword>
<keyword id="KW-0687">Ribonucleoprotein</keyword>
<keyword id="KW-0690">Ribosome biogenesis</keyword>
<keyword id="KW-0698">rRNA processing</keyword>
<keyword id="KW-0853">WD repeat</keyword>
<accession>P33750</accession>
<accession>D6VXZ1</accession>
<feature type="chain" id="PRO_0000051222" description="Protein SOF1">
    <location>
        <begin position="1"/>
        <end position="489"/>
    </location>
</feature>
<feature type="repeat" description="WD 1">
    <location>
        <begin position="65"/>
        <end position="105"/>
    </location>
</feature>
<feature type="repeat" description="WD 2">
    <location>
        <begin position="113"/>
        <end position="158"/>
    </location>
</feature>
<feature type="repeat" description="WD 3">
    <location>
        <begin position="177"/>
        <end position="214"/>
    </location>
</feature>
<feature type="repeat" description="WD 4">
    <location>
        <begin position="217"/>
        <end position="257"/>
    </location>
</feature>
<feature type="repeat" description="WD 5">
    <location>
        <begin position="259"/>
        <end position="299"/>
    </location>
</feature>
<feature type="repeat" description="WD 6">
    <location>
        <begin position="303"/>
        <end position="342"/>
    </location>
</feature>
<feature type="repeat" description="WD 7">
    <location>
        <begin position="346"/>
        <end position="385"/>
    </location>
</feature>
<feature type="region of interest" description="Disordered" evidence="1">
    <location>
        <begin position="440"/>
        <end position="489"/>
    </location>
</feature>
<feature type="compositionally biased region" description="Basic and acidic residues" evidence="1">
    <location>
        <begin position="440"/>
        <end position="459"/>
    </location>
</feature>
<feature type="compositionally biased region" description="Basic and acidic residues" evidence="1">
    <location>
        <begin position="466"/>
        <end position="489"/>
    </location>
</feature>
<dbReference type="EMBL" id="X70052">
    <property type="protein sequence ID" value="CAA49658.1"/>
    <property type="molecule type" value="Genomic_DNA"/>
</dbReference>
<dbReference type="EMBL" id="X91488">
    <property type="protein sequence ID" value="CAA62781.1"/>
    <property type="molecule type" value="Genomic_DNA"/>
</dbReference>
<dbReference type="EMBL" id="Z73116">
    <property type="protein sequence ID" value="CAA97455.1"/>
    <property type="molecule type" value="Genomic_DNA"/>
</dbReference>
<dbReference type="EMBL" id="BK006945">
    <property type="protein sequence ID" value="DAA09307.1"/>
    <property type="molecule type" value="Genomic_DNA"/>
</dbReference>
<dbReference type="PIR" id="S35323">
    <property type="entry name" value="S35323"/>
</dbReference>
<dbReference type="RefSeq" id="NP_013090.1">
    <property type="nucleotide sequence ID" value="NM_001181831.1"/>
</dbReference>
<dbReference type="PDB" id="5WLC">
    <property type="method" value="EM"/>
    <property type="resolution" value="3.80 A"/>
    <property type="chains" value="LU=1-489"/>
</dbReference>
<dbReference type="PDB" id="6KE6">
    <property type="method" value="EM"/>
    <property type="resolution" value="3.40 A"/>
    <property type="chains" value="5I=1-489"/>
</dbReference>
<dbReference type="PDB" id="6LQP">
    <property type="method" value="EM"/>
    <property type="resolution" value="3.20 A"/>
    <property type="chains" value="5I=1-489"/>
</dbReference>
<dbReference type="PDB" id="6LQQ">
    <property type="method" value="EM"/>
    <property type="resolution" value="4.10 A"/>
    <property type="chains" value="5I=1-489"/>
</dbReference>
<dbReference type="PDB" id="6LQR">
    <property type="method" value="EM"/>
    <property type="resolution" value="8.60 A"/>
    <property type="chains" value="5I=1-489"/>
</dbReference>
<dbReference type="PDB" id="6LQS">
    <property type="method" value="EM"/>
    <property type="resolution" value="3.80 A"/>
    <property type="chains" value="5I=1-489"/>
</dbReference>
<dbReference type="PDB" id="6LQT">
    <property type="method" value="EM"/>
    <property type="resolution" value="4.90 A"/>
    <property type="chains" value="5I=1-489"/>
</dbReference>
<dbReference type="PDB" id="6LQU">
    <property type="method" value="EM"/>
    <property type="resolution" value="3.70 A"/>
    <property type="chains" value="5I=1-489"/>
</dbReference>
<dbReference type="PDB" id="6LQV">
    <property type="method" value="EM"/>
    <property type="resolution" value="4.80 A"/>
    <property type="chains" value="5I=1-489"/>
</dbReference>
<dbReference type="PDB" id="6ND4">
    <property type="method" value="EM"/>
    <property type="resolution" value="4.30 A"/>
    <property type="chains" value="U=1-489"/>
</dbReference>
<dbReference type="PDB" id="6ZQA">
    <property type="method" value="EM"/>
    <property type="resolution" value="4.40 A"/>
    <property type="chains" value="JP=1-489"/>
</dbReference>
<dbReference type="PDB" id="6ZQB">
    <property type="method" value="EM"/>
    <property type="resolution" value="3.90 A"/>
    <property type="chains" value="JP=1-489"/>
</dbReference>
<dbReference type="PDB" id="6ZQC">
    <property type="method" value="EM"/>
    <property type="resolution" value="3.80 A"/>
    <property type="chains" value="JP=1-489"/>
</dbReference>
<dbReference type="PDB" id="6ZQD">
    <property type="method" value="EM"/>
    <property type="resolution" value="3.80 A"/>
    <property type="chains" value="JP=1-489"/>
</dbReference>
<dbReference type="PDB" id="7AJT">
    <property type="method" value="EM"/>
    <property type="resolution" value="4.60 A"/>
    <property type="chains" value="JP=1-489"/>
</dbReference>
<dbReference type="PDB" id="7AJU">
    <property type="method" value="EM"/>
    <property type="resolution" value="3.80 A"/>
    <property type="chains" value="JP=1-489"/>
</dbReference>
<dbReference type="PDB" id="7D4I">
    <property type="method" value="EM"/>
    <property type="resolution" value="4.00 A"/>
    <property type="chains" value="5I=1-489"/>
</dbReference>
<dbReference type="PDB" id="7D5S">
    <property type="method" value="EM"/>
    <property type="resolution" value="4.60 A"/>
    <property type="chains" value="5I=1-489"/>
</dbReference>
<dbReference type="PDB" id="7D5T">
    <property type="method" value="EM"/>
    <property type="resolution" value="6.00 A"/>
    <property type="chains" value="5I=1-489"/>
</dbReference>
<dbReference type="PDB" id="7D63">
    <property type="method" value="EM"/>
    <property type="resolution" value="12.30 A"/>
    <property type="chains" value="5I=1-489"/>
</dbReference>
<dbReference type="PDB" id="7SUK">
    <property type="method" value="EM"/>
    <property type="resolution" value="3.99 A"/>
    <property type="chains" value="LU=1-465"/>
</dbReference>
<dbReference type="PDBsum" id="5WLC"/>
<dbReference type="PDBsum" id="6KE6"/>
<dbReference type="PDBsum" id="6LQP"/>
<dbReference type="PDBsum" id="6LQQ"/>
<dbReference type="PDBsum" id="6LQR"/>
<dbReference type="PDBsum" id="6LQS"/>
<dbReference type="PDBsum" id="6LQT"/>
<dbReference type="PDBsum" id="6LQU"/>
<dbReference type="PDBsum" id="6LQV"/>
<dbReference type="PDBsum" id="6ND4"/>
<dbReference type="PDBsum" id="6ZQA"/>
<dbReference type="PDBsum" id="6ZQB"/>
<dbReference type="PDBsum" id="6ZQC"/>
<dbReference type="PDBsum" id="6ZQD"/>
<dbReference type="PDBsum" id="7AJT"/>
<dbReference type="PDBsum" id="7AJU"/>
<dbReference type="PDBsum" id="7D4I"/>
<dbReference type="PDBsum" id="7D5S"/>
<dbReference type="PDBsum" id="7D5T"/>
<dbReference type="PDBsum" id="7D63"/>
<dbReference type="PDBsum" id="7SUK"/>
<dbReference type="EMDB" id="EMD-0441"/>
<dbReference type="EMDB" id="EMD-0949"/>
<dbReference type="EMDB" id="EMD-0950"/>
<dbReference type="EMDB" id="EMD-0951"/>
<dbReference type="EMDB" id="EMD-0952"/>
<dbReference type="EMDB" id="EMD-0953"/>
<dbReference type="EMDB" id="EMD-0954"/>
<dbReference type="EMDB" id="EMD-0955"/>
<dbReference type="EMDB" id="EMD-11357"/>
<dbReference type="EMDB" id="EMD-11358"/>
<dbReference type="EMDB" id="EMD-11359"/>
<dbReference type="EMDB" id="EMD-11360"/>
<dbReference type="EMDB" id="EMD-11807"/>
<dbReference type="EMDB" id="EMD-11808"/>
<dbReference type="EMDB" id="EMD-25441"/>
<dbReference type="EMDB" id="EMD-30574"/>
<dbReference type="EMDB" id="EMD-30584"/>
<dbReference type="EMDB" id="EMD-30585"/>
<dbReference type="EMDB" id="EMD-30588"/>
<dbReference type="EMDB" id="EMD-8859"/>
<dbReference type="EMDB" id="EMD-9964"/>
<dbReference type="SMR" id="P33750"/>
<dbReference type="BioGRID" id="31240">
    <property type="interactions" value="271"/>
</dbReference>
<dbReference type="ComplexPortal" id="CPX-1604">
    <property type="entry name" value="Small ribosomal subunit processome"/>
</dbReference>
<dbReference type="DIP" id="DIP-746N"/>
<dbReference type="FunCoup" id="P33750">
    <property type="interactions" value="1524"/>
</dbReference>
<dbReference type="IntAct" id="P33750">
    <property type="interactions" value="95"/>
</dbReference>
<dbReference type="MINT" id="P33750"/>
<dbReference type="STRING" id="4932.YLL011W"/>
<dbReference type="TCDB" id="8.A.92.1.20">
    <property type="family name" value="the g-protein AlphaBetaGama complex (gpc) family"/>
</dbReference>
<dbReference type="GlyGen" id="P33750">
    <property type="glycosylation" value="1 site, 1 O-linked glycan (1 site)"/>
</dbReference>
<dbReference type="iPTMnet" id="P33750"/>
<dbReference type="PaxDb" id="4932-YLL011W"/>
<dbReference type="PeptideAtlas" id="P33750"/>
<dbReference type="EnsemblFungi" id="YLL011W_mRNA">
    <property type="protein sequence ID" value="YLL011W"/>
    <property type="gene ID" value="YLL011W"/>
</dbReference>
<dbReference type="GeneID" id="850649"/>
<dbReference type="KEGG" id="sce:YLL011W"/>
<dbReference type="AGR" id="SGD:S000003934"/>
<dbReference type="SGD" id="S000003934">
    <property type="gene designation" value="SOF1"/>
</dbReference>
<dbReference type="VEuPathDB" id="FungiDB:YLL011W"/>
<dbReference type="eggNOG" id="KOG0268">
    <property type="taxonomic scope" value="Eukaryota"/>
</dbReference>
<dbReference type="GeneTree" id="ENSGT00390000005711"/>
<dbReference type="HOGENOM" id="CLU_033999_0_0_1"/>
<dbReference type="InParanoid" id="P33750"/>
<dbReference type="OMA" id="EDHNAYI"/>
<dbReference type="OrthoDB" id="10249065at2759"/>
<dbReference type="BioCyc" id="YEAST:G3O-32116-MONOMER"/>
<dbReference type="Reactome" id="R-SCE-6791226">
    <property type="pathway name" value="Major pathway of rRNA processing in the nucleolus and cytosol"/>
</dbReference>
<dbReference type="BioGRID-ORCS" id="850649">
    <property type="hits" value="5 hits in 10 CRISPR screens"/>
</dbReference>
<dbReference type="CD-CODE" id="BDAE0F88">
    <property type="entry name" value="Nucleolus"/>
</dbReference>
<dbReference type="PRO" id="PR:P33750"/>
<dbReference type="Proteomes" id="UP000002311">
    <property type="component" value="Chromosome XII"/>
</dbReference>
<dbReference type="RNAct" id="P33750">
    <property type="molecule type" value="protein"/>
</dbReference>
<dbReference type="GO" id="GO:0030686">
    <property type="term" value="C:90S preribosome"/>
    <property type="evidence" value="ECO:0007005"/>
    <property type="project" value="SGD"/>
</dbReference>
<dbReference type="GO" id="GO:0005730">
    <property type="term" value="C:nucleolus"/>
    <property type="evidence" value="ECO:0000314"/>
    <property type="project" value="SGD"/>
</dbReference>
<dbReference type="GO" id="GO:0005654">
    <property type="term" value="C:nucleoplasm"/>
    <property type="evidence" value="ECO:0000304"/>
    <property type="project" value="Reactome"/>
</dbReference>
<dbReference type="GO" id="GO:0032040">
    <property type="term" value="C:small-subunit processome"/>
    <property type="evidence" value="ECO:0000314"/>
    <property type="project" value="SGD"/>
</dbReference>
<dbReference type="GO" id="GO:0003729">
    <property type="term" value="F:mRNA binding"/>
    <property type="evidence" value="ECO:0007005"/>
    <property type="project" value="SGD"/>
</dbReference>
<dbReference type="GO" id="GO:0030490">
    <property type="term" value="P:maturation of SSU-rRNA"/>
    <property type="evidence" value="ECO:0000303"/>
    <property type="project" value="ComplexPortal"/>
</dbReference>
<dbReference type="GO" id="GO:0000462">
    <property type="term" value="P:maturation of SSU-rRNA from tricistronic rRNA transcript (SSU-rRNA, 5.8S rRNA, LSU-rRNA)"/>
    <property type="evidence" value="ECO:0000315"/>
    <property type="project" value="SGD"/>
</dbReference>
<dbReference type="CDD" id="cd00200">
    <property type="entry name" value="WD40"/>
    <property type="match status" value="1"/>
</dbReference>
<dbReference type="FunFam" id="2.130.10.10:FF:001370">
    <property type="entry name" value="Protein SOF1"/>
    <property type="match status" value="1"/>
</dbReference>
<dbReference type="FunFam" id="2.130.10.10:FF:000743">
    <property type="entry name" value="U3 small nucleolar RNA associated protein"/>
    <property type="match status" value="1"/>
</dbReference>
<dbReference type="Gene3D" id="2.130.10.10">
    <property type="entry name" value="YVTN repeat-like/Quinoprotein amine dehydrogenase"/>
    <property type="match status" value="2"/>
</dbReference>
<dbReference type="InterPro" id="IPR020472">
    <property type="entry name" value="G-protein_beta_WD-40_rep"/>
</dbReference>
<dbReference type="InterPro" id="IPR007287">
    <property type="entry name" value="Sof1"/>
</dbReference>
<dbReference type="InterPro" id="IPR015943">
    <property type="entry name" value="WD40/YVTN_repeat-like_dom_sf"/>
</dbReference>
<dbReference type="InterPro" id="IPR036322">
    <property type="entry name" value="WD40_repeat_dom_sf"/>
</dbReference>
<dbReference type="InterPro" id="IPR001680">
    <property type="entry name" value="WD40_rpt"/>
</dbReference>
<dbReference type="InterPro" id="IPR051733">
    <property type="entry name" value="WD_repeat_DCAF13/WDSOF1"/>
</dbReference>
<dbReference type="PANTHER" id="PTHR22851:SF0">
    <property type="entry name" value="DDB1- AND CUL4-ASSOCIATED FACTOR 13"/>
    <property type="match status" value="1"/>
</dbReference>
<dbReference type="PANTHER" id="PTHR22851">
    <property type="entry name" value="U3 SMALL NUCLEOLAR RNA U3 SNORNA ASSOCIATED PROTEIN"/>
    <property type="match status" value="1"/>
</dbReference>
<dbReference type="Pfam" id="PF04158">
    <property type="entry name" value="Sof1"/>
    <property type="match status" value="1"/>
</dbReference>
<dbReference type="Pfam" id="PF00400">
    <property type="entry name" value="WD40"/>
    <property type="match status" value="5"/>
</dbReference>
<dbReference type="PRINTS" id="PR00320">
    <property type="entry name" value="GPROTEINBRPT"/>
</dbReference>
<dbReference type="SMART" id="SM00320">
    <property type="entry name" value="WD40"/>
    <property type="match status" value="7"/>
</dbReference>
<dbReference type="SUPFAM" id="SSF50978">
    <property type="entry name" value="WD40 repeat-like"/>
    <property type="match status" value="1"/>
</dbReference>
<dbReference type="PROSITE" id="PS50082">
    <property type="entry name" value="WD_REPEATS_2"/>
    <property type="match status" value="4"/>
</dbReference>
<dbReference type="PROSITE" id="PS50294">
    <property type="entry name" value="WD_REPEATS_REGION"/>
    <property type="match status" value="1"/>
</dbReference>